<name>ZBT46_HUMAN</name>
<organism>
    <name type="scientific">Homo sapiens</name>
    <name type="common">Human</name>
    <dbReference type="NCBI Taxonomy" id="9606"/>
    <lineage>
        <taxon>Eukaryota</taxon>
        <taxon>Metazoa</taxon>
        <taxon>Chordata</taxon>
        <taxon>Craniata</taxon>
        <taxon>Vertebrata</taxon>
        <taxon>Euteleostomi</taxon>
        <taxon>Mammalia</taxon>
        <taxon>Eutheria</taxon>
        <taxon>Euarchontoglires</taxon>
        <taxon>Primates</taxon>
        <taxon>Haplorrhini</taxon>
        <taxon>Catarrhini</taxon>
        <taxon>Hominidae</taxon>
        <taxon>Homo</taxon>
    </lineage>
</organism>
<evidence type="ECO:0000250" key="1"/>
<evidence type="ECO:0000255" key="2">
    <source>
        <dbReference type="PROSITE-ProRule" id="PRU00037"/>
    </source>
</evidence>
<evidence type="ECO:0000255" key="3">
    <source>
        <dbReference type="PROSITE-ProRule" id="PRU00042"/>
    </source>
</evidence>
<evidence type="ECO:0000256" key="4">
    <source>
        <dbReference type="SAM" id="MobiDB-lite"/>
    </source>
</evidence>
<evidence type="ECO:0000269" key="5">
    <source>
    </source>
</evidence>
<evidence type="ECO:0000305" key="6"/>
<evidence type="ECO:0007744" key="7">
    <source>
    </source>
</evidence>
<evidence type="ECO:0007744" key="8">
    <source>
    </source>
</evidence>
<evidence type="ECO:0007744" key="9">
    <source>
    </source>
</evidence>
<protein>
    <recommendedName>
        <fullName>Zinc finger and BTB domain-containing protein 46</fullName>
    </recommendedName>
    <alternativeName>
        <fullName>BTB-ZF protein expressed in effector lymphocytes</fullName>
        <shortName>BZEL</shortName>
    </alternativeName>
    <alternativeName>
        <fullName>BTB/POZ domain-containing protein 4</fullName>
    </alternativeName>
    <alternativeName>
        <fullName>Zinc finger protein 340</fullName>
    </alternativeName>
</protein>
<proteinExistence type="evidence at protein level"/>
<gene>
    <name type="primary">ZBTB46</name>
    <name type="synonym">BTBD4</name>
    <name type="synonym">ZNF340</name>
</gene>
<accession>Q86UZ6</accession>
<accession>E1P5K9</accession>
<accession>Q5JWJ3</accession>
<accession>Q6GMV4</accession>
<accession>Q9BQK3</accession>
<accession>Q9H3Z8</accession>
<accession>Q9H3Z9</accession>
<reference key="1">
    <citation type="journal article" date="2001" name="Nature">
        <title>The DNA sequence and comparative analysis of human chromosome 20.</title>
        <authorList>
            <person name="Deloukas P."/>
            <person name="Matthews L.H."/>
            <person name="Ashurst J.L."/>
            <person name="Burton J."/>
            <person name="Gilbert J.G.R."/>
            <person name="Jones M."/>
            <person name="Stavrides G."/>
            <person name="Almeida J.P."/>
            <person name="Babbage A.K."/>
            <person name="Bagguley C.L."/>
            <person name="Bailey J."/>
            <person name="Barlow K.F."/>
            <person name="Bates K.N."/>
            <person name="Beard L.M."/>
            <person name="Beare D.M."/>
            <person name="Beasley O.P."/>
            <person name="Bird C.P."/>
            <person name="Blakey S.E."/>
            <person name="Bridgeman A.M."/>
            <person name="Brown A.J."/>
            <person name="Buck D."/>
            <person name="Burrill W.D."/>
            <person name="Butler A.P."/>
            <person name="Carder C."/>
            <person name="Carter N.P."/>
            <person name="Chapman J.C."/>
            <person name="Clamp M."/>
            <person name="Clark G."/>
            <person name="Clark L.N."/>
            <person name="Clark S.Y."/>
            <person name="Clee C.M."/>
            <person name="Clegg S."/>
            <person name="Cobley V.E."/>
            <person name="Collier R.E."/>
            <person name="Connor R.E."/>
            <person name="Corby N.R."/>
            <person name="Coulson A."/>
            <person name="Coville G.J."/>
            <person name="Deadman R."/>
            <person name="Dhami P.D."/>
            <person name="Dunn M."/>
            <person name="Ellington A.G."/>
            <person name="Frankland J.A."/>
            <person name="Fraser A."/>
            <person name="French L."/>
            <person name="Garner P."/>
            <person name="Grafham D.V."/>
            <person name="Griffiths C."/>
            <person name="Griffiths M.N.D."/>
            <person name="Gwilliam R."/>
            <person name="Hall R.E."/>
            <person name="Hammond S."/>
            <person name="Harley J.L."/>
            <person name="Heath P.D."/>
            <person name="Ho S."/>
            <person name="Holden J.L."/>
            <person name="Howden P.J."/>
            <person name="Huckle E."/>
            <person name="Hunt A.R."/>
            <person name="Hunt S.E."/>
            <person name="Jekosch K."/>
            <person name="Johnson C.M."/>
            <person name="Johnson D."/>
            <person name="Kay M.P."/>
            <person name="Kimberley A.M."/>
            <person name="King A."/>
            <person name="Knights A."/>
            <person name="Laird G.K."/>
            <person name="Lawlor S."/>
            <person name="Lehvaeslaiho M.H."/>
            <person name="Leversha M.A."/>
            <person name="Lloyd C."/>
            <person name="Lloyd D.M."/>
            <person name="Lovell J.D."/>
            <person name="Marsh V.L."/>
            <person name="Martin S.L."/>
            <person name="McConnachie L.J."/>
            <person name="McLay K."/>
            <person name="McMurray A.A."/>
            <person name="Milne S.A."/>
            <person name="Mistry D."/>
            <person name="Moore M.J.F."/>
            <person name="Mullikin J.C."/>
            <person name="Nickerson T."/>
            <person name="Oliver K."/>
            <person name="Parker A."/>
            <person name="Patel R."/>
            <person name="Pearce T.A.V."/>
            <person name="Peck A.I."/>
            <person name="Phillimore B.J.C.T."/>
            <person name="Prathalingam S.R."/>
            <person name="Plumb R.W."/>
            <person name="Ramsay H."/>
            <person name="Rice C.M."/>
            <person name="Ross M.T."/>
            <person name="Scott C.E."/>
            <person name="Sehra H.K."/>
            <person name="Shownkeen R."/>
            <person name="Sims S."/>
            <person name="Skuce C.D."/>
            <person name="Smith M.L."/>
            <person name="Soderlund C."/>
            <person name="Steward C.A."/>
            <person name="Sulston J.E."/>
            <person name="Swann R.M."/>
            <person name="Sycamore N."/>
            <person name="Taylor R."/>
            <person name="Tee L."/>
            <person name="Thomas D.W."/>
            <person name="Thorpe A."/>
            <person name="Tracey A."/>
            <person name="Tromans A.C."/>
            <person name="Vaudin M."/>
            <person name="Wall M."/>
            <person name="Wallis J.M."/>
            <person name="Whitehead S.L."/>
            <person name="Whittaker P."/>
            <person name="Willey D.L."/>
            <person name="Williams L."/>
            <person name="Williams S.A."/>
            <person name="Wilming L."/>
            <person name="Wray P.W."/>
            <person name="Hubbard T."/>
            <person name="Durbin R.M."/>
            <person name="Bentley D.R."/>
            <person name="Beck S."/>
            <person name="Rogers J."/>
        </authorList>
    </citation>
    <scope>NUCLEOTIDE SEQUENCE [LARGE SCALE GENOMIC DNA]</scope>
</reference>
<reference key="2">
    <citation type="submission" date="2005-09" db="EMBL/GenBank/DDBJ databases">
        <authorList>
            <person name="Mural R.J."/>
            <person name="Istrail S."/>
            <person name="Sutton G.G."/>
            <person name="Florea L."/>
            <person name="Halpern A.L."/>
            <person name="Mobarry C.M."/>
            <person name="Lippert R."/>
            <person name="Walenz B."/>
            <person name="Shatkay H."/>
            <person name="Dew I."/>
            <person name="Miller J.R."/>
            <person name="Flanigan M.J."/>
            <person name="Edwards N.J."/>
            <person name="Bolanos R."/>
            <person name="Fasulo D."/>
            <person name="Halldorsson B.V."/>
            <person name="Hannenhalli S."/>
            <person name="Turner R."/>
            <person name="Yooseph S."/>
            <person name="Lu F."/>
            <person name="Nusskern D.R."/>
            <person name="Shue B.C."/>
            <person name="Zheng X.H."/>
            <person name="Zhong F."/>
            <person name="Delcher A.L."/>
            <person name="Huson D.H."/>
            <person name="Kravitz S.A."/>
            <person name="Mouchard L."/>
            <person name="Reinert K."/>
            <person name="Remington K.A."/>
            <person name="Clark A.G."/>
            <person name="Waterman M.S."/>
            <person name="Eichler E.E."/>
            <person name="Adams M.D."/>
            <person name="Hunkapiller M.W."/>
            <person name="Myers E.W."/>
            <person name="Venter J.C."/>
        </authorList>
    </citation>
    <scope>NUCLEOTIDE SEQUENCE [LARGE SCALE GENOMIC DNA]</scope>
</reference>
<reference key="3">
    <citation type="journal article" date="2004" name="Genome Res.">
        <title>The status, quality, and expansion of the NIH full-length cDNA project: the Mammalian Gene Collection (MGC).</title>
        <authorList>
            <consortium name="The MGC Project Team"/>
        </authorList>
    </citation>
    <scope>NUCLEOTIDE SEQUENCE [LARGE SCALE MRNA]</scope>
    <scope>VARIANT ALA-11</scope>
    <source>
        <tissue>Prostate</tissue>
    </source>
</reference>
<reference key="4">
    <citation type="journal article" date="2013" name="J. Proteome Res.">
        <title>Toward a comprehensive characterization of a human cancer cell phosphoproteome.</title>
        <authorList>
            <person name="Zhou H."/>
            <person name="Di Palma S."/>
            <person name="Preisinger C."/>
            <person name="Peng M."/>
            <person name="Polat A.N."/>
            <person name="Heck A.J."/>
            <person name="Mohammed S."/>
        </authorList>
    </citation>
    <scope>PHOSPHORYLATION [LARGE SCALE ANALYSIS] AT SER-234</scope>
    <scope>IDENTIFICATION BY MASS SPECTROMETRY [LARGE SCALE ANALYSIS]</scope>
    <source>
        <tissue>Cervix carcinoma</tissue>
        <tissue>Erythroleukemia</tissue>
    </source>
</reference>
<reference key="5">
    <citation type="journal article" date="2014" name="Nat. Struct. Mol. Biol.">
        <title>Uncovering global SUMOylation signaling networks in a site-specific manner.</title>
        <authorList>
            <person name="Hendriks I.A."/>
            <person name="D'Souza R.C."/>
            <person name="Yang B."/>
            <person name="Verlaan-de Vries M."/>
            <person name="Mann M."/>
            <person name="Vertegaal A.C."/>
        </authorList>
    </citation>
    <scope>SUMOYLATION [LARGE SCALE ANALYSIS] AT LYS-229</scope>
    <scope>IDENTIFICATION BY MASS SPECTROMETRY [LARGE SCALE ANALYSIS]</scope>
</reference>
<reference key="6">
    <citation type="journal article" date="2017" name="Nat. Struct. Mol. Biol.">
        <title>Site-specific mapping of the human SUMO proteome reveals co-modification with phosphorylation.</title>
        <authorList>
            <person name="Hendriks I.A."/>
            <person name="Lyon D."/>
            <person name="Young C."/>
            <person name="Jensen L.J."/>
            <person name="Vertegaal A.C."/>
            <person name="Nielsen M.L."/>
        </authorList>
    </citation>
    <scope>SUMOYLATION [LARGE SCALE ANALYSIS] AT LYS-229</scope>
    <scope>IDENTIFICATION BY MASS SPECTROMETRY [LARGE SCALE ANALYSIS]</scope>
</reference>
<sequence>MNNRKEDMEITSHYRHLLRELNEQRQHGVLCDVCVVVEGKVFKAHKNVLLGSSRYFKTLYCQVQKTSEQATVTHLDIVTAQGFKAIIDFMYSAHLALTSRNVIEVMSAASFLQMTDIVQACHDFIKAALDISIKSDASDELAEFEIGASSSSSTEALISAVMAGRSISPWLARRTSPANSSGDSAIASCHDGGSSYGKEDQEPKADGPDDVSSQPLWPGDVGYGPLRIKEEQVSPSQYGGSELPSAKDGAVQNSFSEQSAGDAWQPTGRRKNRKNKETVRHITQQVEDDSRASSPVPSFLPTSGWPFSSRDSNADLSVTEASSSDSRGERAELYAQVEEGLLGGEASYLGPPLTPEKDDALHQATAVANLRAALMSKNSLLSLKADVLGDDGSLLFEYLPRGAHSLSLNEFTVIRKKFKCPYCSFSAMHQCILKRHMRSHTGERPYPCEICGKKFTRREHMKRHTLVHSKDKKYVCKVCSRVFMSAASVGIRHGSRRHGVCTDCAGRGMAGPLDHGGGGGEGSPEALFPGDGPYLEDPEDPRGEAEELGEDDEGLAPEDALLADDKDEEDSPRPRSPPGGPDKDFAWLS</sequence>
<comment type="function">
    <text evidence="1">Functions as a transcriptional repressor for PRDM1.</text>
</comment>
<comment type="subcellular location">
    <subcellularLocation>
        <location evidence="6">Nucleus</location>
    </subcellularLocation>
</comment>
<comment type="PTM">
    <text evidence="1">Sumoylated. Desumoylation by DESI1 reverses transcriptional repression activity (By similarity).</text>
</comment>
<keyword id="KW-1017">Isopeptide bond</keyword>
<keyword id="KW-0479">Metal-binding</keyword>
<keyword id="KW-0539">Nucleus</keyword>
<keyword id="KW-0597">Phosphoprotein</keyword>
<keyword id="KW-1267">Proteomics identification</keyword>
<keyword id="KW-1185">Reference proteome</keyword>
<keyword id="KW-0677">Repeat</keyword>
<keyword id="KW-0804">Transcription</keyword>
<keyword id="KW-0805">Transcription regulation</keyword>
<keyword id="KW-0832">Ubl conjugation</keyword>
<keyword id="KW-0862">Zinc</keyword>
<keyword id="KW-0863">Zinc-finger</keyword>
<feature type="chain" id="PRO_0000047746" description="Zinc finger and BTB domain-containing protein 46">
    <location>
        <begin position="1"/>
        <end position="589"/>
    </location>
</feature>
<feature type="domain" description="BTB" evidence="2">
    <location>
        <begin position="31"/>
        <end position="99"/>
    </location>
</feature>
<feature type="zinc finger region" description="C2H2-type 1" evidence="3">
    <location>
        <begin position="418"/>
        <end position="436"/>
    </location>
</feature>
<feature type="zinc finger region" description="C2H2-type 2" evidence="3">
    <location>
        <begin position="446"/>
        <end position="468"/>
    </location>
</feature>
<feature type="region of interest" description="Disordered" evidence="4">
    <location>
        <begin position="173"/>
        <end position="330"/>
    </location>
</feature>
<feature type="region of interest" description="Disordered" evidence="4">
    <location>
        <begin position="512"/>
        <end position="589"/>
    </location>
</feature>
<feature type="compositionally biased region" description="Basic and acidic residues" evidence="4">
    <location>
        <begin position="197"/>
        <end position="207"/>
    </location>
</feature>
<feature type="compositionally biased region" description="Polar residues" evidence="4">
    <location>
        <begin position="305"/>
        <end position="325"/>
    </location>
</feature>
<feature type="compositionally biased region" description="Acidic residues" evidence="4">
    <location>
        <begin position="546"/>
        <end position="570"/>
    </location>
</feature>
<feature type="modified residue" description="Phosphoserine" evidence="7">
    <location>
        <position position="234"/>
    </location>
</feature>
<feature type="cross-link" description="Glycyl lysine isopeptide (Lys-Gly) (interchain with G-Cter in SUMO2)" evidence="8 9">
    <location>
        <position position="229"/>
    </location>
</feature>
<feature type="sequence variant" id="VAR_030629" description="In dbSNP:rs2281929." evidence="5">
    <original>T</original>
    <variation>A</variation>
    <location>
        <position position="11"/>
    </location>
</feature>
<dbReference type="EMBL" id="AL121845">
    <property type="status" value="NOT_ANNOTATED_CDS"/>
    <property type="molecule type" value="Genomic_DNA"/>
</dbReference>
<dbReference type="EMBL" id="CH471077">
    <property type="protein sequence ID" value="EAW75205.1"/>
    <property type="molecule type" value="Genomic_DNA"/>
</dbReference>
<dbReference type="EMBL" id="CH471077">
    <property type="protein sequence ID" value="EAW75206.1"/>
    <property type="molecule type" value="Genomic_DNA"/>
</dbReference>
<dbReference type="EMBL" id="BC052269">
    <property type="protein sequence ID" value="AAH52269.1"/>
    <property type="molecule type" value="mRNA"/>
</dbReference>
<dbReference type="EMBL" id="BC073800">
    <property type="protein sequence ID" value="AAH73800.1"/>
    <property type="molecule type" value="mRNA"/>
</dbReference>
<dbReference type="CCDS" id="CCDS13538.1"/>
<dbReference type="RefSeq" id="NP_001356670.1">
    <property type="nucleotide sequence ID" value="NM_001369741.1"/>
</dbReference>
<dbReference type="RefSeq" id="NP_079500.2">
    <property type="nucleotide sequence ID" value="NM_025224.4"/>
</dbReference>
<dbReference type="RefSeq" id="XP_005260252.1">
    <property type="nucleotide sequence ID" value="XM_005260195.5"/>
</dbReference>
<dbReference type="RefSeq" id="XP_005260253.1">
    <property type="nucleotide sequence ID" value="XM_005260196.3"/>
</dbReference>
<dbReference type="RefSeq" id="XP_005260254.1">
    <property type="nucleotide sequence ID" value="XM_005260197.5"/>
</dbReference>
<dbReference type="RefSeq" id="XP_005260255.1">
    <property type="nucleotide sequence ID" value="XM_005260198.5"/>
</dbReference>
<dbReference type="RefSeq" id="XP_006723763.1">
    <property type="nucleotide sequence ID" value="XM_006723700.4"/>
</dbReference>
<dbReference type="RefSeq" id="XP_011526850.1">
    <property type="nucleotide sequence ID" value="XM_011528548.3"/>
</dbReference>
<dbReference type="RefSeq" id="XP_047295857.1">
    <property type="nucleotide sequence ID" value="XM_047439901.1"/>
</dbReference>
<dbReference type="SMR" id="Q86UZ6"/>
<dbReference type="BioGRID" id="126648">
    <property type="interactions" value="33"/>
</dbReference>
<dbReference type="FunCoup" id="Q86UZ6">
    <property type="interactions" value="257"/>
</dbReference>
<dbReference type="IntAct" id="Q86UZ6">
    <property type="interactions" value="18"/>
</dbReference>
<dbReference type="STRING" id="9606.ENSP00000378536"/>
<dbReference type="iPTMnet" id="Q86UZ6"/>
<dbReference type="PhosphoSitePlus" id="Q86UZ6"/>
<dbReference type="BioMuta" id="ZBTB46"/>
<dbReference type="DMDM" id="42558860"/>
<dbReference type="jPOST" id="Q86UZ6"/>
<dbReference type="MassIVE" id="Q86UZ6"/>
<dbReference type="PaxDb" id="9606-ENSP00000378536"/>
<dbReference type="PeptideAtlas" id="Q86UZ6"/>
<dbReference type="ProteomicsDB" id="69942"/>
<dbReference type="Antibodypedia" id="2860">
    <property type="antibodies" value="185 antibodies from 26 providers"/>
</dbReference>
<dbReference type="DNASU" id="140685"/>
<dbReference type="Ensembl" id="ENST00000245663.9">
    <property type="protein sequence ID" value="ENSP00000245663.3"/>
    <property type="gene ID" value="ENSG00000130584.12"/>
</dbReference>
<dbReference type="Ensembl" id="ENST00000302995.2">
    <property type="protein sequence ID" value="ENSP00000303102.2"/>
    <property type="gene ID" value="ENSG00000130584.12"/>
</dbReference>
<dbReference type="Ensembl" id="ENST00000395104.5">
    <property type="protein sequence ID" value="ENSP00000378536.1"/>
    <property type="gene ID" value="ENSG00000130584.12"/>
</dbReference>
<dbReference type="GeneID" id="140685"/>
<dbReference type="KEGG" id="hsa:140685"/>
<dbReference type="MANE-Select" id="ENST00000245663.9">
    <property type="protein sequence ID" value="ENSP00000245663.3"/>
    <property type="RefSeq nucleotide sequence ID" value="NM_001369741.1"/>
    <property type="RefSeq protein sequence ID" value="NP_001356670.1"/>
</dbReference>
<dbReference type="UCSC" id="uc061ypq.1">
    <property type="organism name" value="human"/>
</dbReference>
<dbReference type="AGR" id="HGNC:16094"/>
<dbReference type="CTD" id="140685"/>
<dbReference type="DisGeNET" id="140685"/>
<dbReference type="GeneCards" id="ZBTB46"/>
<dbReference type="HGNC" id="HGNC:16094">
    <property type="gene designation" value="ZBTB46"/>
</dbReference>
<dbReference type="HPA" id="ENSG00000130584">
    <property type="expression patterns" value="Tissue enhanced (brain)"/>
</dbReference>
<dbReference type="MIM" id="614639">
    <property type="type" value="gene"/>
</dbReference>
<dbReference type="neXtProt" id="NX_Q86UZ6"/>
<dbReference type="OpenTargets" id="ENSG00000130584"/>
<dbReference type="PharmGKB" id="PA25441"/>
<dbReference type="VEuPathDB" id="HostDB:ENSG00000130584"/>
<dbReference type="eggNOG" id="KOG1721">
    <property type="taxonomic scope" value="Eukaryota"/>
</dbReference>
<dbReference type="GeneTree" id="ENSGT00940000158060"/>
<dbReference type="HOGENOM" id="CLU_022356_2_0_1"/>
<dbReference type="InParanoid" id="Q86UZ6"/>
<dbReference type="OMA" id="WPADSGM"/>
<dbReference type="OrthoDB" id="8117402at2759"/>
<dbReference type="PAN-GO" id="Q86UZ6">
    <property type="GO annotations" value="3 GO annotations based on evolutionary models"/>
</dbReference>
<dbReference type="PhylomeDB" id="Q86UZ6"/>
<dbReference type="TreeFam" id="TF341953"/>
<dbReference type="PathwayCommons" id="Q86UZ6"/>
<dbReference type="SignaLink" id="Q86UZ6"/>
<dbReference type="BioGRID-ORCS" id="140685">
    <property type="hits" value="12 hits in 1210 CRISPR screens"/>
</dbReference>
<dbReference type="ChiTaRS" id="ZBTB46">
    <property type="organism name" value="human"/>
</dbReference>
<dbReference type="GenomeRNAi" id="140685"/>
<dbReference type="Pharos" id="Q86UZ6">
    <property type="development level" value="Tbio"/>
</dbReference>
<dbReference type="PRO" id="PR:Q86UZ6"/>
<dbReference type="Proteomes" id="UP000005640">
    <property type="component" value="Chromosome 20"/>
</dbReference>
<dbReference type="RNAct" id="Q86UZ6">
    <property type="molecule type" value="protein"/>
</dbReference>
<dbReference type="Bgee" id="ENSG00000130584">
    <property type="expression patterns" value="Expressed in oviduct epithelium and 144 other cell types or tissues"/>
</dbReference>
<dbReference type="ExpressionAtlas" id="Q86UZ6">
    <property type="expression patterns" value="baseline and differential"/>
</dbReference>
<dbReference type="GO" id="GO:0000785">
    <property type="term" value="C:chromatin"/>
    <property type="evidence" value="ECO:0000250"/>
    <property type="project" value="ARUK-UCL"/>
</dbReference>
<dbReference type="GO" id="GO:0005634">
    <property type="term" value="C:nucleus"/>
    <property type="evidence" value="ECO:0007669"/>
    <property type="project" value="UniProtKB-SubCell"/>
</dbReference>
<dbReference type="GO" id="GO:0000981">
    <property type="term" value="F:DNA-binding transcription factor activity, RNA polymerase II-specific"/>
    <property type="evidence" value="ECO:0000247"/>
    <property type="project" value="NTNU_SB"/>
</dbReference>
<dbReference type="GO" id="GO:0001227">
    <property type="term" value="F:DNA-binding transcription repressor activity, RNA polymerase II-specific"/>
    <property type="evidence" value="ECO:0000250"/>
    <property type="project" value="ARUK-UCL"/>
</dbReference>
<dbReference type="GO" id="GO:0000976">
    <property type="term" value="F:transcription cis-regulatory region binding"/>
    <property type="evidence" value="ECO:0000250"/>
    <property type="project" value="ARUK-UCL"/>
</dbReference>
<dbReference type="GO" id="GO:0008270">
    <property type="term" value="F:zinc ion binding"/>
    <property type="evidence" value="ECO:0007669"/>
    <property type="project" value="UniProtKB-KW"/>
</dbReference>
<dbReference type="GO" id="GO:0030851">
    <property type="term" value="P:granulocyte differentiation"/>
    <property type="evidence" value="ECO:0007669"/>
    <property type="project" value="Ensembl"/>
</dbReference>
<dbReference type="GO" id="GO:0030225">
    <property type="term" value="P:macrophage differentiation"/>
    <property type="evidence" value="ECO:0007669"/>
    <property type="project" value="Ensembl"/>
</dbReference>
<dbReference type="GO" id="GO:2001199">
    <property type="term" value="P:negative regulation of dendritic cell differentiation"/>
    <property type="evidence" value="ECO:0007669"/>
    <property type="project" value="Ensembl"/>
</dbReference>
<dbReference type="GO" id="GO:0030853">
    <property type="term" value="P:negative regulation of granulocyte differentiation"/>
    <property type="evidence" value="ECO:0007669"/>
    <property type="project" value="Ensembl"/>
</dbReference>
<dbReference type="GO" id="GO:0002695">
    <property type="term" value="P:negative regulation of leukocyte activation"/>
    <property type="evidence" value="ECO:0007669"/>
    <property type="project" value="Ensembl"/>
</dbReference>
<dbReference type="GO" id="GO:0045650">
    <property type="term" value="P:negative regulation of macrophage differentiation"/>
    <property type="evidence" value="ECO:0007669"/>
    <property type="project" value="Ensembl"/>
</dbReference>
<dbReference type="GO" id="GO:0045656">
    <property type="term" value="P:negative regulation of monocyte differentiation"/>
    <property type="evidence" value="ECO:0007669"/>
    <property type="project" value="Ensembl"/>
</dbReference>
<dbReference type="GO" id="GO:0000122">
    <property type="term" value="P:negative regulation of transcription by RNA polymerase II"/>
    <property type="evidence" value="ECO:0000250"/>
    <property type="project" value="ARUK-UCL"/>
</dbReference>
<dbReference type="GO" id="GO:0002273">
    <property type="term" value="P:plasmacytoid dendritic cell differentiation"/>
    <property type="evidence" value="ECO:0007669"/>
    <property type="project" value="Ensembl"/>
</dbReference>
<dbReference type="GO" id="GO:2001200">
    <property type="term" value="P:positive regulation of dendritic cell differentiation"/>
    <property type="evidence" value="ECO:0007669"/>
    <property type="project" value="Ensembl"/>
</dbReference>
<dbReference type="GO" id="GO:0006357">
    <property type="term" value="P:regulation of transcription by RNA polymerase II"/>
    <property type="evidence" value="ECO:0000314"/>
    <property type="project" value="ARUK-UCL"/>
</dbReference>
<dbReference type="CDD" id="cd18230">
    <property type="entry name" value="BTB_POZ_ZBTB46"/>
    <property type="match status" value="1"/>
</dbReference>
<dbReference type="FunFam" id="3.30.160.60:FF:001046">
    <property type="entry name" value="Zinc finger and BTB domain containing 46"/>
    <property type="match status" value="1"/>
</dbReference>
<dbReference type="FunFam" id="3.30.710.10:FF:000045">
    <property type="entry name" value="zinc finger and BTB domain-containing protein 10"/>
    <property type="match status" value="1"/>
</dbReference>
<dbReference type="FunFam" id="3.30.160.60:FF:000379">
    <property type="entry name" value="Zinc finger and BTB domain-containing protein 46"/>
    <property type="match status" value="1"/>
</dbReference>
<dbReference type="Gene3D" id="3.30.160.60">
    <property type="entry name" value="Classic Zinc Finger"/>
    <property type="match status" value="2"/>
</dbReference>
<dbReference type="Gene3D" id="3.30.710.10">
    <property type="entry name" value="Potassium Channel Kv1.1, Chain A"/>
    <property type="match status" value="1"/>
</dbReference>
<dbReference type="InterPro" id="IPR000210">
    <property type="entry name" value="BTB/POZ_dom"/>
</dbReference>
<dbReference type="InterPro" id="IPR011333">
    <property type="entry name" value="SKP1/BTB/POZ_sf"/>
</dbReference>
<dbReference type="InterPro" id="IPR036236">
    <property type="entry name" value="Znf_C2H2_sf"/>
</dbReference>
<dbReference type="InterPro" id="IPR013087">
    <property type="entry name" value="Znf_C2H2_type"/>
</dbReference>
<dbReference type="InterPro" id="IPR050457">
    <property type="entry name" value="ZnFinger_BTB_dom_contain"/>
</dbReference>
<dbReference type="PANTHER" id="PTHR46105">
    <property type="entry name" value="AGAP004733-PA"/>
    <property type="match status" value="1"/>
</dbReference>
<dbReference type="PANTHER" id="PTHR46105:SF21">
    <property type="entry name" value="ZINC FINGER AND BTB DOMAIN CONTAINING 46"/>
    <property type="match status" value="1"/>
</dbReference>
<dbReference type="Pfam" id="PF00651">
    <property type="entry name" value="BTB"/>
    <property type="match status" value="1"/>
</dbReference>
<dbReference type="Pfam" id="PF13465">
    <property type="entry name" value="zf-H2C2_2"/>
    <property type="match status" value="1"/>
</dbReference>
<dbReference type="SMART" id="SM00225">
    <property type="entry name" value="BTB"/>
    <property type="match status" value="1"/>
</dbReference>
<dbReference type="SMART" id="SM00355">
    <property type="entry name" value="ZnF_C2H2"/>
    <property type="match status" value="3"/>
</dbReference>
<dbReference type="SUPFAM" id="SSF57667">
    <property type="entry name" value="beta-beta-alpha zinc fingers"/>
    <property type="match status" value="1"/>
</dbReference>
<dbReference type="SUPFAM" id="SSF54695">
    <property type="entry name" value="POZ domain"/>
    <property type="match status" value="1"/>
</dbReference>
<dbReference type="PROSITE" id="PS50097">
    <property type="entry name" value="BTB"/>
    <property type="match status" value="1"/>
</dbReference>
<dbReference type="PROSITE" id="PS00028">
    <property type="entry name" value="ZINC_FINGER_C2H2_1"/>
    <property type="match status" value="1"/>
</dbReference>
<dbReference type="PROSITE" id="PS50157">
    <property type="entry name" value="ZINC_FINGER_C2H2_2"/>
    <property type="match status" value="2"/>
</dbReference>